<reference key="1">
    <citation type="journal article" date="2009" name="PLoS Genet.">
        <title>Organised genome dynamics in the Escherichia coli species results in highly diverse adaptive paths.</title>
        <authorList>
            <person name="Touchon M."/>
            <person name="Hoede C."/>
            <person name="Tenaillon O."/>
            <person name="Barbe V."/>
            <person name="Baeriswyl S."/>
            <person name="Bidet P."/>
            <person name="Bingen E."/>
            <person name="Bonacorsi S."/>
            <person name="Bouchier C."/>
            <person name="Bouvet O."/>
            <person name="Calteau A."/>
            <person name="Chiapello H."/>
            <person name="Clermont O."/>
            <person name="Cruveiller S."/>
            <person name="Danchin A."/>
            <person name="Diard M."/>
            <person name="Dossat C."/>
            <person name="Karoui M.E."/>
            <person name="Frapy E."/>
            <person name="Garry L."/>
            <person name="Ghigo J.M."/>
            <person name="Gilles A.M."/>
            <person name="Johnson J."/>
            <person name="Le Bouguenec C."/>
            <person name="Lescat M."/>
            <person name="Mangenot S."/>
            <person name="Martinez-Jehanne V."/>
            <person name="Matic I."/>
            <person name="Nassif X."/>
            <person name="Oztas S."/>
            <person name="Petit M.A."/>
            <person name="Pichon C."/>
            <person name="Rouy Z."/>
            <person name="Ruf C.S."/>
            <person name="Schneider D."/>
            <person name="Tourret J."/>
            <person name="Vacherie B."/>
            <person name="Vallenet D."/>
            <person name="Medigue C."/>
            <person name="Rocha E.P.C."/>
            <person name="Denamur E."/>
        </authorList>
    </citation>
    <scope>NUCLEOTIDE SEQUENCE [LARGE SCALE GENOMIC DNA]</scope>
    <source>
        <strain>S88 / ExPEC</strain>
    </source>
</reference>
<protein>
    <recommendedName>
        <fullName evidence="1">Probable [Fe-S]-dependent transcriptional repressor</fullName>
    </recommendedName>
</protein>
<dbReference type="EMBL" id="CU928161">
    <property type="protein sequence ID" value="CAR05011.1"/>
    <property type="molecule type" value="Genomic_DNA"/>
</dbReference>
<dbReference type="RefSeq" id="WP_000157585.1">
    <property type="nucleotide sequence ID" value="NC_011742.1"/>
</dbReference>
<dbReference type="SMR" id="B7MDN6"/>
<dbReference type="KEGG" id="ecz:ECS88_3797"/>
<dbReference type="HOGENOM" id="CLU_189182_0_0_6"/>
<dbReference type="Proteomes" id="UP000000747">
    <property type="component" value="Chromosome"/>
</dbReference>
<dbReference type="GO" id="GO:0003677">
    <property type="term" value="F:DNA binding"/>
    <property type="evidence" value="ECO:0007669"/>
    <property type="project" value="UniProtKB-KW"/>
</dbReference>
<dbReference type="GO" id="GO:0005506">
    <property type="term" value="F:iron ion binding"/>
    <property type="evidence" value="ECO:0007669"/>
    <property type="project" value="UniProtKB-UniRule"/>
</dbReference>
<dbReference type="GO" id="GO:0051536">
    <property type="term" value="F:iron-sulfur cluster binding"/>
    <property type="evidence" value="ECO:0007669"/>
    <property type="project" value="UniProtKB-KW"/>
</dbReference>
<dbReference type="Gene3D" id="1.10.10.10">
    <property type="entry name" value="Winged helix-like DNA-binding domain superfamily/Winged helix DNA-binding domain"/>
    <property type="match status" value="1"/>
</dbReference>
<dbReference type="HAMAP" id="MF_01586">
    <property type="entry name" value="FeoC"/>
    <property type="match status" value="1"/>
</dbReference>
<dbReference type="InterPro" id="IPR023732">
    <property type="entry name" value="FeoC"/>
</dbReference>
<dbReference type="InterPro" id="IPR015102">
    <property type="entry name" value="Tscrpt_reg_HTH_FeoC"/>
</dbReference>
<dbReference type="InterPro" id="IPR036388">
    <property type="entry name" value="WH-like_DNA-bd_sf"/>
</dbReference>
<dbReference type="InterPro" id="IPR036390">
    <property type="entry name" value="WH_DNA-bd_sf"/>
</dbReference>
<dbReference type="NCBIfam" id="NF011960">
    <property type="entry name" value="PRK15431.1"/>
    <property type="match status" value="1"/>
</dbReference>
<dbReference type="Pfam" id="PF09012">
    <property type="entry name" value="FeoC"/>
    <property type="match status" value="1"/>
</dbReference>
<dbReference type="SUPFAM" id="SSF46785">
    <property type="entry name" value="Winged helix' DNA-binding domain"/>
    <property type="match status" value="1"/>
</dbReference>
<accession>B7MDN6</accession>
<evidence type="ECO:0000255" key="1">
    <source>
        <dbReference type="HAMAP-Rule" id="MF_01586"/>
    </source>
</evidence>
<name>FEOC_ECO45</name>
<gene>
    <name evidence="1" type="primary">feoC</name>
    <name type="ordered locus">ECS88_3797</name>
</gene>
<feature type="chain" id="PRO_1000201324" description="Probable [Fe-S]-dependent transcriptional repressor">
    <location>
        <begin position="1"/>
        <end position="78"/>
    </location>
</feature>
<feature type="binding site" evidence="1">
    <location>
        <position position="56"/>
    </location>
    <ligand>
        <name>iron-sulfur cluster</name>
        <dbReference type="ChEBI" id="CHEBI:30408"/>
    </ligand>
</feature>
<feature type="binding site" evidence="1">
    <location>
        <position position="61"/>
    </location>
    <ligand>
        <name>iron-sulfur cluster</name>
        <dbReference type="ChEBI" id="CHEBI:30408"/>
    </ligand>
</feature>
<feature type="binding site" evidence="1">
    <location>
        <position position="64"/>
    </location>
    <ligand>
        <name>iron-sulfur cluster</name>
        <dbReference type="ChEBI" id="CHEBI:30408"/>
    </ligand>
</feature>
<feature type="binding site" evidence="1">
    <location>
        <position position="70"/>
    </location>
    <ligand>
        <name>iron-sulfur cluster</name>
        <dbReference type="ChEBI" id="CHEBI:30408"/>
    </ligand>
</feature>
<comment type="function">
    <text evidence="1">May function as a transcriptional regulator that controls feoABC expression.</text>
</comment>
<comment type="similarity">
    <text evidence="1">Belongs to the FeoC family.</text>
</comment>
<proteinExistence type="inferred from homology"/>
<sequence>MASLIQVRDLLALRGRMEAAQISQTLNTPQPMINAMLKQLESMGKAVRIQEEPDGCLSGSCKSCPEGKACLHEWWALR</sequence>
<keyword id="KW-0238">DNA-binding</keyword>
<keyword id="KW-0408">Iron</keyword>
<keyword id="KW-0411">Iron-sulfur</keyword>
<keyword id="KW-0479">Metal-binding</keyword>
<keyword id="KW-1185">Reference proteome</keyword>
<keyword id="KW-0678">Repressor</keyword>
<keyword id="KW-0804">Transcription</keyword>
<keyword id="KW-0805">Transcription regulation</keyword>
<organism>
    <name type="scientific">Escherichia coli O45:K1 (strain S88 / ExPEC)</name>
    <dbReference type="NCBI Taxonomy" id="585035"/>
    <lineage>
        <taxon>Bacteria</taxon>
        <taxon>Pseudomonadati</taxon>
        <taxon>Pseudomonadota</taxon>
        <taxon>Gammaproteobacteria</taxon>
        <taxon>Enterobacterales</taxon>
        <taxon>Enterobacteriaceae</taxon>
        <taxon>Escherichia</taxon>
    </lineage>
</organism>